<evidence type="ECO:0000255" key="1">
    <source>
        <dbReference type="HAMAP-Rule" id="MF_01008"/>
    </source>
</evidence>
<evidence type="ECO:0000255" key="2">
    <source>
        <dbReference type="PROSITE-ProRule" id="PRU01076"/>
    </source>
</evidence>
<dbReference type="EMBL" id="CR628336">
    <property type="protein sequence ID" value="CAH12125.1"/>
    <property type="molecule type" value="Genomic_DNA"/>
</dbReference>
<dbReference type="RefSeq" id="WP_011213343.1">
    <property type="nucleotide sequence ID" value="NC_006368.1"/>
</dbReference>
<dbReference type="SMR" id="Q5X6J1"/>
<dbReference type="GeneID" id="57034901"/>
<dbReference type="KEGG" id="lpp:lpp0974"/>
<dbReference type="LegioList" id="lpp0974"/>
<dbReference type="HOGENOM" id="CLU_107907_2_0_6"/>
<dbReference type="GO" id="GO:0005737">
    <property type="term" value="C:cytoplasm"/>
    <property type="evidence" value="ECO:0007669"/>
    <property type="project" value="UniProtKB-UniRule"/>
</dbReference>
<dbReference type="GO" id="GO:0009295">
    <property type="term" value="C:nucleoid"/>
    <property type="evidence" value="ECO:0007669"/>
    <property type="project" value="UniProtKB-SubCell"/>
</dbReference>
<dbReference type="GO" id="GO:0003700">
    <property type="term" value="F:DNA-binding transcription factor activity"/>
    <property type="evidence" value="ECO:0007669"/>
    <property type="project" value="UniProtKB-UniRule"/>
</dbReference>
<dbReference type="GO" id="GO:0000976">
    <property type="term" value="F:transcription cis-regulatory region binding"/>
    <property type="evidence" value="ECO:0007669"/>
    <property type="project" value="TreeGrafter"/>
</dbReference>
<dbReference type="GO" id="GO:2000143">
    <property type="term" value="P:negative regulation of DNA-templated transcription initiation"/>
    <property type="evidence" value="ECO:0007669"/>
    <property type="project" value="TreeGrafter"/>
</dbReference>
<dbReference type="CDD" id="cd16321">
    <property type="entry name" value="MraZ_C"/>
    <property type="match status" value="1"/>
</dbReference>
<dbReference type="CDD" id="cd16320">
    <property type="entry name" value="MraZ_N"/>
    <property type="match status" value="1"/>
</dbReference>
<dbReference type="Gene3D" id="3.40.1550.20">
    <property type="entry name" value="Transcriptional regulator MraZ domain"/>
    <property type="match status" value="1"/>
</dbReference>
<dbReference type="HAMAP" id="MF_01008">
    <property type="entry name" value="MraZ"/>
    <property type="match status" value="1"/>
</dbReference>
<dbReference type="InterPro" id="IPR003444">
    <property type="entry name" value="MraZ"/>
</dbReference>
<dbReference type="InterPro" id="IPR035644">
    <property type="entry name" value="MraZ_C"/>
</dbReference>
<dbReference type="InterPro" id="IPR020603">
    <property type="entry name" value="MraZ_dom"/>
</dbReference>
<dbReference type="InterPro" id="IPR035642">
    <property type="entry name" value="MraZ_N"/>
</dbReference>
<dbReference type="InterPro" id="IPR038619">
    <property type="entry name" value="MraZ_sf"/>
</dbReference>
<dbReference type="InterPro" id="IPR007159">
    <property type="entry name" value="SpoVT-AbrB_dom"/>
</dbReference>
<dbReference type="InterPro" id="IPR037914">
    <property type="entry name" value="SpoVT-AbrB_sf"/>
</dbReference>
<dbReference type="NCBIfam" id="TIGR00242">
    <property type="entry name" value="division/cell wall cluster transcriptional repressor MraZ"/>
    <property type="match status" value="1"/>
</dbReference>
<dbReference type="PANTHER" id="PTHR34701">
    <property type="entry name" value="TRANSCRIPTIONAL REGULATOR MRAZ"/>
    <property type="match status" value="1"/>
</dbReference>
<dbReference type="PANTHER" id="PTHR34701:SF1">
    <property type="entry name" value="TRANSCRIPTIONAL REGULATOR MRAZ"/>
    <property type="match status" value="1"/>
</dbReference>
<dbReference type="Pfam" id="PF02381">
    <property type="entry name" value="MraZ"/>
    <property type="match status" value="2"/>
</dbReference>
<dbReference type="SUPFAM" id="SSF89447">
    <property type="entry name" value="AbrB/MazE/MraZ-like"/>
    <property type="match status" value="1"/>
</dbReference>
<dbReference type="PROSITE" id="PS51740">
    <property type="entry name" value="SPOVT_ABRB"/>
    <property type="match status" value="2"/>
</dbReference>
<reference key="1">
    <citation type="journal article" date="2004" name="Nat. Genet.">
        <title>Evidence in the Legionella pneumophila genome for exploitation of host cell functions and high genome plasticity.</title>
        <authorList>
            <person name="Cazalet C."/>
            <person name="Rusniok C."/>
            <person name="Brueggemann H."/>
            <person name="Zidane N."/>
            <person name="Magnier A."/>
            <person name="Ma L."/>
            <person name="Tichit M."/>
            <person name="Jarraud S."/>
            <person name="Bouchier C."/>
            <person name="Vandenesch F."/>
            <person name="Kunst F."/>
            <person name="Etienne J."/>
            <person name="Glaser P."/>
            <person name="Buchrieser C."/>
        </authorList>
    </citation>
    <scope>NUCLEOTIDE SEQUENCE [LARGE SCALE GENOMIC DNA]</scope>
    <source>
        <strain>Paris</strain>
    </source>
</reference>
<keyword id="KW-0963">Cytoplasm</keyword>
<keyword id="KW-0238">DNA-binding</keyword>
<keyword id="KW-0677">Repeat</keyword>
<keyword id="KW-0804">Transcription</keyword>
<keyword id="KW-0805">Transcription regulation</keyword>
<proteinExistence type="inferred from homology"/>
<comment type="subunit">
    <text evidence="1">Forms oligomers.</text>
</comment>
<comment type="subcellular location">
    <subcellularLocation>
        <location evidence="1">Cytoplasm</location>
        <location evidence="1">Nucleoid</location>
    </subcellularLocation>
</comment>
<comment type="similarity">
    <text evidence="1">Belongs to the MraZ family.</text>
</comment>
<accession>Q5X6J1</accession>
<name>MRAZ_LEGPA</name>
<sequence>MFRGINAITIDTKGRLAIPTRYRSALGAEDKIPLVVTIDTEETCLLLYTAAQWQIIEDNLQKLPSFNAAARRIQRLLIGHATDVEVDANGRVLLPTVLRNYAKLEKDVVMIGQGNKFEVWNKELWESKREQWLAEEASMTDGLPEEMKTFSL</sequence>
<protein>
    <recommendedName>
        <fullName>Transcriptional regulator MraZ</fullName>
    </recommendedName>
</protein>
<organism>
    <name type="scientific">Legionella pneumophila (strain Paris)</name>
    <dbReference type="NCBI Taxonomy" id="297246"/>
    <lineage>
        <taxon>Bacteria</taxon>
        <taxon>Pseudomonadati</taxon>
        <taxon>Pseudomonadota</taxon>
        <taxon>Gammaproteobacteria</taxon>
        <taxon>Legionellales</taxon>
        <taxon>Legionellaceae</taxon>
        <taxon>Legionella</taxon>
    </lineage>
</organism>
<gene>
    <name evidence="1" type="primary">mraZ</name>
    <name type="ordered locus">lpp0974</name>
</gene>
<feature type="chain" id="PRO_0000108491" description="Transcriptional regulator MraZ">
    <location>
        <begin position="1"/>
        <end position="152"/>
    </location>
</feature>
<feature type="domain" description="SpoVT-AbrB 1" evidence="2">
    <location>
        <begin position="5"/>
        <end position="52"/>
    </location>
</feature>
<feature type="domain" description="SpoVT-AbrB 2" evidence="2">
    <location>
        <begin position="81"/>
        <end position="124"/>
    </location>
</feature>